<protein>
    <recommendedName>
        <fullName evidence="1">Glycine cleavage system H protein</fullName>
    </recommendedName>
</protein>
<gene>
    <name evidence="1" type="primary">gcvH</name>
    <name type="ordered locus">P9301_18591</name>
</gene>
<keyword id="KW-0450">Lipoyl</keyword>
<keyword id="KW-1185">Reference proteome</keyword>
<accession>A3PFF7</accession>
<sequence>MSYKFPDNLNYADTHEYVLEENGLLKIGVSEFAIDQLGDIVFVELADEGATLEKGETFGTIESVKAVEEVYLPFSGEIVSVNESVIENPELLQSDPIGDGWLVILKPESKASIADLMTSEEYQSKVVPK</sequence>
<evidence type="ECO:0000255" key="1">
    <source>
        <dbReference type="HAMAP-Rule" id="MF_00272"/>
    </source>
</evidence>
<evidence type="ECO:0000255" key="2">
    <source>
        <dbReference type="PROSITE-ProRule" id="PRU01066"/>
    </source>
</evidence>
<feature type="chain" id="PRO_0000302411" description="Glycine cleavage system H protein">
    <location>
        <begin position="1"/>
        <end position="129"/>
    </location>
</feature>
<feature type="domain" description="Lipoyl-binding" evidence="2">
    <location>
        <begin position="24"/>
        <end position="106"/>
    </location>
</feature>
<feature type="modified residue" description="N6-lipoyllysine" evidence="1">
    <location>
        <position position="65"/>
    </location>
</feature>
<name>GCSH_PROM0</name>
<reference key="1">
    <citation type="journal article" date="2007" name="PLoS Genet.">
        <title>Patterns and implications of gene gain and loss in the evolution of Prochlorococcus.</title>
        <authorList>
            <person name="Kettler G.C."/>
            <person name="Martiny A.C."/>
            <person name="Huang K."/>
            <person name="Zucker J."/>
            <person name="Coleman M.L."/>
            <person name="Rodrigue S."/>
            <person name="Chen F."/>
            <person name="Lapidus A."/>
            <person name="Ferriera S."/>
            <person name="Johnson J."/>
            <person name="Steglich C."/>
            <person name="Church G.M."/>
            <person name="Richardson P."/>
            <person name="Chisholm S.W."/>
        </authorList>
    </citation>
    <scope>NUCLEOTIDE SEQUENCE [LARGE SCALE GENOMIC DNA]</scope>
    <source>
        <strain>MIT 9301</strain>
    </source>
</reference>
<proteinExistence type="inferred from homology"/>
<organism>
    <name type="scientific">Prochlorococcus marinus (strain MIT 9301)</name>
    <dbReference type="NCBI Taxonomy" id="167546"/>
    <lineage>
        <taxon>Bacteria</taxon>
        <taxon>Bacillati</taxon>
        <taxon>Cyanobacteriota</taxon>
        <taxon>Cyanophyceae</taxon>
        <taxon>Synechococcales</taxon>
        <taxon>Prochlorococcaceae</taxon>
        <taxon>Prochlorococcus</taxon>
    </lineage>
</organism>
<dbReference type="EMBL" id="CP000576">
    <property type="protein sequence ID" value="ABO18482.1"/>
    <property type="molecule type" value="Genomic_DNA"/>
</dbReference>
<dbReference type="RefSeq" id="WP_011863764.1">
    <property type="nucleotide sequence ID" value="NC_009091.1"/>
</dbReference>
<dbReference type="SMR" id="A3PFF7"/>
<dbReference type="STRING" id="167546.P9301_18591"/>
<dbReference type="KEGG" id="pmg:P9301_18591"/>
<dbReference type="eggNOG" id="COG0509">
    <property type="taxonomic scope" value="Bacteria"/>
</dbReference>
<dbReference type="HOGENOM" id="CLU_097408_2_0_3"/>
<dbReference type="OrthoDB" id="9796712at2"/>
<dbReference type="Proteomes" id="UP000001430">
    <property type="component" value="Chromosome"/>
</dbReference>
<dbReference type="GO" id="GO:0005829">
    <property type="term" value="C:cytosol"/>
    <property type="evidence" value="ECO:0007669"/>
    <property type="project" value="TreeGrafter"/>
</dbReference>
<dbReference type="GO" id="GO:0005960">
    <property type="term" value="C:glycine cleavage complex"/>
    <property type="evidence" value="ECO:0007669"/>
    <property type="project" value="InterPro"/>
</dbReference>
<dbReference type="GO" id="GO:0019464">
    <property type="term" value="P:glycine decarboxylation via glycine cleavage system"/>
    <property type="evidence" value="ECO:0007669"/>
    <property type="project" value="UniProtKB-UniRule"/>
</dbReference>
<dbReference type="CDD" id="cd06848">
    <property type="entry name" value="GCS_H"/>
    <property type="match status" value="1"/>
</dbReference>
<dbReference type="Gene3D" id="2.40.50.100">
    <property type="match status" value="1"/>
</dbReference>
<dbReference type="HAMAP" id="MF_00272">
    <property type="entry name" value="GcvH"/>
    <property type="match status" value="1"/>
</dbReference>
<dbReference type="InterPro" id="IPR003016">
    <property type="entry name" value="2-oxoA_DH_lipoyl-BS"/>
</dbReference>
<dbReference type="InterPro" id="IPR000089">
    <property type="entry name" value="Biotin_lipoyl"/>
</dbReference>
<dbReference type="InterPro" id="IPR002930">
    <property type="entry name" value="GCV_H"/>
</dbReference>
<dbReference type="InterPro" id="IPR033753">
    <property type="entry name" value="GCV_H/Fam206"/>
</dbReference>
<dbReference type="InterPro" id="IPR017453">
    <property type="entry name" value="GCV_H_sub"/>
</dbReference>
<dbReference type="InterPro" id="IPR011053">
    <property type="entry name" value="Single_hybrid_motif"/>
</dbReference>
<dbReference type="NCBIfam" id="TIGR00527">
    <property type="entry name" value="gcvH"/>
    <property type="match status" value="1"/>
</dbReference>
<dbReference type="NCBIfam" id="NF002270">
    <property type="entry name" value="PRK01202.1"/>
    <property type="match status" value="1"/>
</dbReference>
<dbReference type="PANTHER" id="PTHR11715">
    <property type="entry name" value="GLYCINE CLEAVAGE SYSTEM H PROTEIN"/>
    <property type="match status" value="1"/>
</dbReference>
<dbReference type="PANTHER" id="PTHR11715:SF3">
    <property type="entry name" value="GLYCINE CLEAVAGE SYSTEM H PROTEIN-RELATED"/>
    <property type="match status" value="1"/>
</dbReference>
<dbReference type="Pfam" id="PF01597">
    <property type="entry name" value="GCV_H"/>
    <property type="match status" value="1"/>
</dbReference>
<dbReference type="SUPFAM" id="SSF51230">
    <property type="entry name" value="Single hybrid motif"/>
    <property type="match status" value="1"/>
</dbReference>
<dbReference type="PROSITE" id="PS50968">
    <property type="entry name" value="BIOTINYL_LIPOYL"/>
    <property type="match status" value="1"/>
</dbReference>
<dbReference type="PROSITE" id="PS00189">
    <property type="entry name" value="LIPOYL"/>
    <property type="match status" value="1"/>
</dbReference>
<comment type="function">
    <text evidence="1">The glycine cleavage system catalyzes the degradation of glycine. The H protein shuttles the methylamine group of glycine from the P protein to the T protein.</text>
</comment>
<comment type="cofactor">
    <cofactor evidence="1">
        <name>(R)-lipoate</name>
        <dbReference type="ChEBI" id="CHEBI:83088"/>
    </cofactor>
    <text evidence="1">Binds 1 lipoyl cofactor covalently.</text>
</comment>
<comment type="subunit">
    <text evidence="1">The glycine cleavage system is composed of four proteins: P, T, L and H.</text>
</comment>
<comment type="similarity">
    <text evidence="1">Belongs to the GcvH family.</text>
</comment>